<keyword id="KW-0255">Endonuclease</keyword>
<keyword id="KW-0378">Hydrolase</keyword>
<keyword id="KW-0479">Metal-binding</keyword>
<keyword id="KW-0540">Nuclease</keyword>
<keyword id="KW-1185">Reference proteome</keyword>
<keyword id="KW-0819">tRNA processing</keyword>
<keyword id="KW-0862">Zinc</keyword>
<comment type="function">
    <text evidence="1">Zinc phosphodiesterase, which displays some tRNA 3'-processing endonuclease activity. Probably involved in tRNA maturation, by removing a 3'-trailer from precursor tRNA.</text>
</comment>
<comment type="catalytic activity">
    <reaction evidence="1">
        <text>Endonucleolytic cleavage of RNA, removing extra 3' nucleotides from tRNA precursor, generating 3' termini of tRNAs. A 3'-hydroxy group is left at the tRNA terminus and a 5'-phosphoryl group is left at the trailer molecule.</text>
        <dbReference type="EC" id="3.1.26.11"/>
    </reaction>
</comment>
<comment type="cofactor">
    <cofactor evidence="1">
        <name>Zn(2+)</name>
        <dbReference type="ChEBI" id="CHEBI:29105"/>
    </cofactor>
    <text evidence="1">Binds 2 Zn(2+) ions.</text>
</comment>
<comment type="subunit">
    <text evidence="1">Homodimer.</text>
</comment>
<comment type="similarity">
    <text evidence="1">Belongs to the RNase Z family.</text>
</comment>
<comment type="caution">
    <text evidence="2">Lacks two conserved zinc binding sites.</text>
</comment>
<accession>A5U5A1</accession>
<protein>
    <recommendedName>
        <fullName evidence="1">Ribonuclease Z</fullName>
        <shortName evidence="1">RNase Z</shortName>
        <ecNumber evidence="1">3.1.26.11</ecNumber>
    </recommendedName>
    <alternativeName>
        <fullName evidence="1">tRNA 3 endonuclease</fullName>
    </alternativeName>
    <alternativeName>
        <fullName evidence="1">tRNase Z</fullName>
    </alternativeName>
</protein>
<reference key="1">
    <citation type="journal article" date="2008" name="PLoS ONE">
        <title>Genetic basis of virulence attenuation revealed by comparative genomic analysis of Mycobacterium tuberculosis strain H37Ra versus H37Rv.</title>
        <authorList>
            <person name="Zheng H."/>
            <person name="Lu L."/>
            <person name="Wang B."/>
            <person name="Pu S."/>
            <person name="Zhang X."/>
            <person name="Zhu G."/>
            <person name="Shi W."/>
            <person name="Zhang L."/>
            <person name="Wang H."/>
            <person name="Wang S."/>
            <person name="Zhao G."/>
            <person name="Zhang Y."/>
        </authorList>
    </citation>
    <scope>NUCLEOTIDE SEQUENCE [LARGE SCALE GENOMIC DNA]</scope>
    <source>
        <strain>ATCC 25177 / H37Ra</strain>
    </source>
</reference>
<feature type="chain" id="PRO_1000070306" description="Ribonuclease Z">
    <location>
        <begin position="1"/>
        <end position="273"/>
    </location>
</feature>
<feature type="binding site" evidence="1">
    <location>
        <position position="61"/>
    </location>
    <ligand>
        <name>Zn(2+)</name>
        <dbReference type="ChEBI" id="CHEBI:29105"/>
        <label>1</label>
        <note>catalytic</note>
    </ligand>
</feature>
<feature type="binding site" evidence="1">
    <location>
        <position position="63"/>
    </location>
    <ligand>
        <name>Zn(2+)</name>
        <dbReference type="ChEBI" id="CHEBI:29105"/>
        <label>1</label>
        <note>catalytic</note>
    </ligand>
</feature>
<feature type="binding site" evidence="1">
    <location>
        <position position="146"/>
    </location>
    <ligand>
        <name>Zn(2+)</name>
        <dbReference type="ChEBI" id="CHEBI:29105"/>
        <label>1</label>
        <note>catalytic</note>
    </ligand>
</feature>
<feature type="binding site" evidence="1">
    <location>
        <position position="169"/>
    </location>
    <ligand>
        <name>Zn(2+)</name>
        <dbReference type="ChEBI" id="CHEBI:29105"/>
        <label>1</label>
        <note>catalytic</note>
    </ligand>
</feature>
<feature type="binding site" evidence="1">
    <location>
        <position position="169"/>
    </location>
    <ligand>
        <name>Zn(2+)</name>
        <dbReference type="ChEBI" id="CHEBI:29105"/>
        <label>2</label>
        <note>catalytic</note>
    </ligand>
</feature>
<feature type="binding site" evidence="1">
    <location>
        <position position="233"/>
    </location>
    <ligand>
        <name>Zn(2+)</name>
        <dbReference type="ChEBI" id="CHEBI:29105"/>
        <label>2</label>
        <note>catalytic</note>
    </ligand>
</feature>
<sequence length="273" mass="28707">MLEITLLGTGSPIPDPDRAGPSTLVRAGAQAFLVDCGRGVLQRAAAVGVGAAGLSAVLLTHLHGDVLITSWVTNFAADPAPLPIIGPPGTAEVVEATLKAFGHDIGYRIAHHADLTTPPPIEVHEYTAGPAWDRDGVTIRVAPTDHRPVTPTIGFRIESDGASVVLAGDTVPCDSLDQLAAGADALVHTVIRKDIVTQIPQQRVKDICDYHSSVQEAAATANRAGVGTLVMTHYVPAIGPGQEEQWRALAATEFSGRIEVGNDLHRVEVHPRR</sequence>
<name>RNZ_MYCTA</name>
<dbReference type="EC" id="3.1.26.11" evidence="1"/>
<dbReference type="EMBL" id="CP000611">
    <property type="protein sequence ID" value="ABQ74201.1"/>
    <property type="molecule type" value="Genomic_DNA"/>
</dbReference>
<dbReference type="RefSeq" id="WP_003911863.1">
    <property type="nucleotide sequence ID" value="NZ_CP016972.1"/>
</dbReference>
<dbReference type="SMR" id="A5U5A1"/>
<dbReference type="KEGG" id="mra:MRA_2431"/>
<dbReference type="eggNOG" id="COG1234">
    <property type="taxonomic scope" value="Bacteria"/>
</dbReference>
<dbReference type="HOGENOM" id="CLU_031317_0_0_11"/>
<dbReference type="Proteomes" id="UP000001988">
    <property type="component" value="Chromosome"/>
</dbReference>
<dbReference type="GO" id="GO:0042781">
    <property type="term" value="F:3'-tRNA processing endoribonuclease activity"/>
    <property type="evidence" value="ECO:0007669"/>
    <property type="project" value="UniProtKB-UniRule"/>
</dbReference>
<dbReference type="GO" id="GO:0046872">
    <property type="term" value="F:metal ion binding"/>
    <property type="evidence" value="ECO:0007669"/>
    <property type="project" value="UniProtKB-KW"/>
</dbReference>
<dbReference type="CDD" id="cd07719">
    <property type="entry name" value="arylsulfatase_AtsA-like_MBL-fold"/>
    <property type="match status" value="1"/>
</dbReference>
<dbReference type="Gene3D" id="3.60.15.10">
    <property type="entry name" value="Ribonuclease Z/Hydroxyacylglutathione hydrolase-like"/>
    <property type="match status" value="1"/>
</dbReference>
<dbReference type="HAMAP" id="MF_01818">
    <property type="entry name" value="RNase_Z_BN"/>
    <property type="match status" value="1"/>
</dbReference>
<dbReference type="InterPro" id="IPR044094">
    <property type="entry name" value="AtsA-like_MBL-fold"/>
</dbReference>
<dbReference type="InterPro" id="IPR001279">
    <property type="entry name" value="Metallo-B-lactamas"/>
</dbReference>
<dbReference type="InterPro" id="IPR036866">
    <property type="entry name" value="RibonucZ/Hydroxyglut_hydro"/>
</dbReference>
<dbReference type="InterPro" id="IPR013471">
    <property type="entry name" value="RNase_Z/BN"/>
</dbReference>
<dbReference type="NCBIfam" id="NF000806">
    <property type="entry name" value="PRK00055.2-4"/>
    <property type="match status" value="1"/>
</dbReference>
<dbReference type="PANTHER" id="PTHR46018">
    <property type="entry name" value="ZINC PHOSPHODIESTERASE ELAC PROTEIN 1"/>
    <property type="match status" value="1"/>
</dbReference>
<dbReference type="PANTHER" id="PTHR46018:SF2">
    <property type="entry name" value="ZINC PHOSPHODIESTERASE ELAC PROTEIN 1"/>
    <property type="match status" value="1"/>
</dbReference>
<dbReference type="Pfam" id="PF12706">
    <property type="entry name" value="Lactamase_B_2"/>
    <property type="match status" value="1"/>
</dbReference>
<dbReference type="SMART" id="SM00849">
    <property type="entry name" value="Lactamase_B"/>
    <property type="match status" value="1"/>
</dbReference>
<dbReference type="SUPFAM" id="SSF56281">
    <property type="entry name" value="Metallo-hydrolase/oxidoreductase"/>
    <property type="match status" value="1"/>
</dbReference>
<organism>
    <name type="scientific">Mycobacterium tuberculosis (strain ATCC 25177 / H37Ra)</name>
    <dbReference type="NCBI Taxonomy" id="419947"/>
    <lineage>
        <taxon>Bacteria</taxon>
        <taxon>Bacillati</taxon>
        <taxon>Actinomycetota</taxon>
        <taxon>Actinomycetes</taxon>
        <taxon>Mycobacteriales</taxon>
        <taxon>Mycobacteriaceae</taxon>
        <taxon>Mycobacterium</taxon>
        <taxon>Mycobacterium tuberculosis complex</taxon>
    </lineage>
</organism>
<evidence type="ECO:0000255" key="1">
    <source>
        <dbReference type="HAMAP-Rule" id="MF_01818"/>
    </source>
</evidence>
<evidence type="ECO:0000305" key="2"/>
<proteinExistence type="inferred from homology"/>
<gene>
    <name evidence="1" type="primary">rnz</name>
    <name type="ordered locus">MRA_2431</name>
</gene>